<name>VIRC1_RHIRH</name>
<proteinExistence type="predicted"/>
<reference key="1">
    <citation type="journal article" date="1988" name="Mol. Gen. Genet.">
        <title>Organization and characterization of the virCD genes from Agrobacterium rhizogenes.</title>
        <authorList>
            <person name="Hirayama T."/>
            <person name="Muranaka T."/>
            <person name="Ohkawa H."/>
            <person name="Oka A."/>
        </authorList>
    </citation>
    <scope>NUCLEOTIDE SEQUENCE [GENOMIC DNA]</scope>
    <source>
        <strain>A4</strain>
    </source>
</reference>
<keyword id="KW-0192">Crown gall tumor</keyword>
<keyword id="KW-0614">Plasmid</keyword>
<feature type="chain" id="PRO_0000065849" description="Protein virC1">
    <location>
        <begin position="1"/>
        <end position="231"/>
    </location>
</feature>
<gene>
    <name type="primary">virC1</name>
</gene>
<dbReference type="EMBL" id="X12867">
    <property type="protein sequence ID" value="CAA31349.1"/>
    <property type="molecule type" value="Genomic_DNA"/>
</dbReference>
<dbReference type="PIR" id="S06881">
    <property type="entry name" value="S06881"/>
</dbReference>
<dbReference type="RefSeq" id="WP_032488280.1">
    <property type="nucleotide sequence ID" value="NZ_VCBD01000008.1"/>
</dbReference>
<dbReference type="SMR" id="P13459"/>
<dbReference type="eggNOG" id="COG1192">
    <property type="taxonomic scope" value="Bacteria"/>
</dbReference>
<dbReference type="CDD" id="cd02042">
    <property type="entry name" value="ParAB_family"/>
    <property type="match status" value="1"/>
</dbReference>
<dbReference type="FunFam" id="3.40.50.300:FF:001775">
    <property type="entry name" value="Protein virC1"/>
    <property type="match status" value="1"/>
</dbReference>
<dbReference type="Gene3D" id="3.40.50.300">
    <property type="entry name" value="P-loop containing nucleotide triphosphate hydrolases"/>
    <property type="match status" value="1"/>
</dbReference>
<dbReference type="InterPro" id="IPR050678">
    <property type="entry name" value="DNA_Partitioning_ATPase"/>
</dbReference>
<dbReference type="InterPro" id="IPR027417">
    <property type="entry name" value="P-loop_NTPase"/>
</dbReference>
<dbReference type="InterPro" id="IPR009744">
    <property type="entry name" value="VirC1"/>
</dbReference>
<dbReference type="NCBIfam" id="NF010423">
    <property type="entry name" value="PRK13849.1"/>
    <property type="match status" value="1"/>
</dbReference>
<dbReference type="PANTHER" id="PTHR13696:SF99">
    <property type="entry name" value="COBYRINIC ACID AC-DIAMIDE SYNTHASE"/>
    <property type="match status" value="1"/>
</dbReference>
<dbReference type="PANTHER" id="PTHR13696">
    <property type="entry name" value="P-LOOP CONTAINING NUCLEOSIDE TRIPHOSPHATE HYDROLASE"/>
    <property type="match status" value="1"/>
</dbReference>
<dbReference type="Pfam" id="PF07015">
    <property type="entry name" value="VirC1"/>
    <property type="match status" value="1"/>
</dbReference>
<dbReference type="PIRSF" id="PIRSF009320">
    <property type="entry name" value="Nuc_binding_HP_1000"/>
    <property type="match status" value="1"/>
</dbReference>
<dbReference type="SUPFAM" id="SSF52540">
    <property type="entry name" value="P-loop containing nucleoside triphosphate hydrolases"/>
    <property type="match status" value="1"/>
</dbReference>
<protein>
    <recommendedName>
        <fullName>Protein virC1</fullName>
    </recommendedName>
</protein>
<sequence>MKLLTFCSFKGGAGKTTALMGLCAALASDGRRVALFDADENRPLTRWKENALRSNTWDSFCEVYAAEEMSLLEAAYEDAELQGFDYALADTHGGSSELNNTIIASSNLLLIPTMLTPLDIDEALSTYRYVIELLLSENLAIPTAVLRQRVPVGRLTTSQRAMSDMLASLPVVQSPMHERDAFAAMKERGMLHLTLLNMRTDPSMRLLERNLRIAMEELVTISKLVGEALER</sequence>
<geneLocation type="plasmid">
    <name>pRiA4b</name>
</geneLocation>
<accession>P13459</accession>
<organism>
    <name type="scientific">Rhizobium rhizogenes</name>
    <name type="common">Agrobacterium rhizogenes</name>
    <dbReference type="NCBI Taxonomy" id="359"/>
    <lineage>
        <taxon>Bacteria</taxon>
        <taxon>Pseudomonadati</taxon>
        <taxon>Pseudomonadota</taxon>
        <taxon>Alphaproteobacteria</taxon>
        <taxon>Hyphomicrobiales</taxon>
        <taxon>Rhizobiaceae</taxon>
        <taxon>Rhizobium/Agrobacterium group</taxon>
        <taxon>Rhizobium</taxon>
    </lineage>
</organism>